<comment type="function">
    <text evidence="1">Catalyzes the formation of pyridoxal 5'-phosphate from ribose 5-phosphate (RBP), glyceraldehyde 3-phosphate (G3P) and ammonia. The ammonia is provided by the PdxT subunit. Can also use ribulose 5-phosphate and dihydroxyacetone phosphate as substrates, resulting from enzyme-catalyzed isomerization of RBP and G3P, respectively.</text>
</comment>
<comment type="catalytic activity">
    <reaction evidence="1">
        <text>aldehydo-D-ribose 5-phosphate + D-glyceraldehyde 3-phosphate + L-glutamine = pyridoxal 5'-phosphate + L-glutamate + phosphate + 3 H2O + H(+)</text>
        <dbReference type="Rhea" id="RHEA:31507"/>
        <dbReference type="ChEBI" id="CHEBI:15377"/>
        <dbReference type="ChEBI" id="CHEBI:15378"/>
        <dbReference type="ChEBI" id="CHEBI:29985"/>
        <dbReference type="ChEBI" id="CHEBI:43474"/>
        <dbReference type="ChEBI" id="CHEBI:58273"/>
        <dbReference type="ChEBI" id="CHEBI:58359"/>
        <dbReference type="ChEBI" id="CHEBI:59776"/>
        <dbReference type="ChEBI" id="CHEBI:597326"/>
        <dbReference type="EC" id="4.3.3.6"/>
    </reaction>
</comment>
<comment type="pathway">
    <text evidence="1">Cofactor biosynthesis; pyridoxal 5'-phosphate biosynthesis.</text>
</comment>
<comment type="subunit">
    <text evidence="1">In the presence of PdxT, forms a dodecamer of heterodimers.</text>
</comment>
<comment type="similarity">
    <text evidence="1">Belongs to the PdxS/SNZ family.</text>
</comment>
<protein>
    <recommendedName>
        <fullName evidence="1">Pyridoxal 5'-phosphate synthase subunit PdxS</fullName>
        <shortName evidence="1">PLP synthase subunit PdxS</shortName>
        <ecNumber evidence="1">4.3.3.6</ecNumber>
    </recommendedName>
    <alternativeName>
        <fullName evidence="1">Pdx1</fullName>
    </alternativeName>
</protein>
<keyword id="KW-0456">Lyase</keyword>
<keyword id="KW-0663">Pyridoxal phosphate</keyword>
<keyword id="KW-0704">Schiff base</keyword>
<evidence type="ECO:0000255" key="1">
    <source>
        <dbReference type="HAMAP-Rule" id="MF_01824"/>
    </source>
</evidence>
<organism>
    <name type="scientific">Francisella tularensis subsp. tularensis (strain WY96-3418)</name>
    <dbReference type="NCBI Taxonomy" id="418136"/>
    <lineage>
        <taxon>Bacteria</taxon>
        <taxon>Pseudomonadati</taxon>
        <taxon>Pseudomonadota</taxon>
        <taxon>Gammaproteobacteria</taxon>
        <taxon>Thiotrichales</taxon>
        <taxon>Francisellaceae</taxon>
        <taxon>Francisella</taxon>
    </lineage>
</organism>
<accession>A4IZB5</accession>
<reference key="1">
    <citation type="journal article" date="2007" name="PLoS ONE">
        <title>Complete genomic characterization of a pathogenic A.II strain of Francisella tularensis subspecies tularensis.</title>
        <authorList>
            <person name="Beckstrom-Sternberg S.M."/>
            <person name="Auerbach R.K."/>
            <person name="Godbole S."/>
            <person name="Pearson J.V."/>
            <person name="Beckstrom-Sternberg J.S."/>
            <person name="Deng Z."/>
            <person name="Munk C."/>
            <person name="Kubota K."/>
            <person name="Zhou Y."/>
            <person name="Bruce D."/>
            <person name="Noronha J."/>
            <person name="Scheuermann R.H."/>
            <person name="Wang A."/>
            <person name="Wei X."/>
            <person name="Wang J."/>
            <person name="Hao J."/>
            <person name="Wagner D.M."/>
            <person name="Brettin T.S."/>
            <person name="Brown N."/>
            <person name="Gilna P."/>
            <person name="Keim P.S."/>
        </authorList>
    </citation>
    <scope>NUCLEOTIDE SEQUENCE [LARGE SCALE GENOMIC DNA]</scope>
    <source>
        <strain>WY96-3418</strain>
    </source>
</reference>
<name>PDXS_FRATW</name>
<feature type="chain" id="PRO_1000070375" description="Pyridoxal 5'-phosphate synthase subunit PdxS">
    <location>
        <begin position="1"/>
        <end position="287"/>
    </location>
</feature>
<feature type="active site" description="Schiff-base intermediate with D-ribose 5-phosphate" evidence="1">
    <location>
        <position position="78"/>
    </location>
</feature>
<feature type="binding site" evidence="1">
    <location>
        <position position="21"/>
    </location>
    <ligand>
        <name>D-ribose 5-phosphate</name>
        <dbReference type="ChEBI" id="CHEBI:78346"/>
    </ligand>
</feature>
<feature type="binding site" evidence="1">
    <location>
        <position position="150"/>
    </location>
    <ligand>
        <name>D-ribose 5-phosphate</name>
        <dbReference type="ChEBI" id="CHEBI:78346"/>
    </ligand>
</feature>
<feature type="binding site" evidence="1">
    <location>
        <position position="162"/>
    </location>
    <ligand>
        <name>D-glyceraldehyde 3-phosphate</name>
        <dbReference type="ChEBI" id="CHEBI:59776"/>
    </ligand>
</feature>
<feature type="binding site" evidence="1">
    <location>
        <position position="211"/>
    </location>
    <ligand>
        <name>D-ribose 5-phosphate</name>
        <dbReference type="ChEBI" id="CHEBI:78346"/>
    </ligand>
</feature>
<feature type="binding site" evidence="1">
    <location>
        <begin position="232"/>
        <end position="233"/>
    </location>
    <ligand>
        <name>D-ribose 5-phosphate</name>
        <dbReference type="ChEBI" id="CHEBI:78346"/>
    </ligand>
</feature>
<sequence>MSDINIKIGLAEMLKGGVIMDVVNAEQAEIAQQAGAVAVMALERVPADIRKDGGIARMSDPKLIKEIMSVVSIPVMAKARIGHFVEAQILESLGVDFIDESEVLTPADELNHIDKDSFKVPFVCGCTNLGEALRRIGEGAALIRTKGEAGTGNIVEAVRQLRQVNKDINYIKNADKSELMAIAKNLQAPYDLVTYVHKNGKLPVPNFSAGGVATPADAALMMQLGAESVFVGSGIFKSADPLKRARAIVSAVTYYNDAKILAEVSEDLGEPMTGINCDFEKFSQRGW</sequence>
<proteinExistence type="inferred from homology"/>
<gene>
    <name evidence="1" type="primary">pdxS</name>
    <name type="ordered locus">FTW_1554</name>
</gene>
<dbReference type="EC" id="4.3.3.6" evidence="1"/>
<dbReference type="EMBL" id="CP000608">
    <property type="protein sequence ID" value="ABO47265.1"/>
    <property type="molecule type" value="Genomic_DNA"/>
</dbReference>
<dbReference type="RefSeq" id="WP_003016899.1">
    <property type="nucleotide sequence ID" value="NC_009257.1"/>
</dbReference>
<dbReference type="SMR" id="A4IZB5"/>
<dbReference type="KEGG" id="ftw:FTW_1554"/>
<dbReference type="HOGENOM" id="CLU_055352_1_0_6"/>
<dbReference type="UniPathway" id="UPA00245"/>
<dbReference type="GO" id="GO:0036381">
    <property type="term" value="F:pyridoxal 5'-phosphate synthase (glutamine hydrolysing) activity"/>
    <property type="evidence" value="ECO:0007669"/>
    <property type="project" value="UniProtKB-UniRule"/>
</dbReference>
<dbReference type="GO" id="GO:0006520">
    <property type="term" value="P:amino acid metabolic process"/>
    <property type="evidence" value="ECO:0007669"/>
    <property type="project" value="TreeGrafter"/>
</dbReference>
<dbReference type="GO" id="GO:0042823">
    <property type="term" value="P:pyridoxal phosphate biosynthetic process"/>
    <property type="evidence" value="ECO:0007669"/>
    <property type="project" value="UniProtKB-UniRule"/>
</dbReference>
<dbReference type="GO" id="GO:0008615">
    <property type="term" value="P:pyridoxine biosynthetic process"/>
    <property type="evidence" value="ECO:0007669"/>
    <property type="project" value="TreeGrafter"/>
</dbReference>
<dbReference type="CDD" id="cd04727">
    <property type="entry name" value="pdxS"/>
    <property type="match status" value="1"/>
</dbReference>
<dbReference type="FunFam" id="3.20.20.70:FF:000001">
    <property type="entry name" value="Pyridoxine biosynthesis protein PDX1"/>
    <property type="match status" value="1"/>
</dbReference>
<dbReference type="Gene3D" id="3.20.20.70">
    <property type="entry name" value="Aldolase class I"/>
    <property type="match status" value="1"/>
</dbReference>
<dbReference type="HAMAP" id="MF_01824">
    <property type="entry name" value="PdxS"/>
    <property type="match status" value="1"/>
</dbReference>
<dbReference type="InterPro" id="IPR013785">
    <property type="entry name" value="Aldolase_TIM"/>
</dbReference>
<dbReference type="InterPro" id="IPR001852">
    <property type="entry name" value="PdxS/SNZ"/>
</dbReference>
<dbReference type="InterPro" id="IPR033755">
    <property type="entry name" value="PdxS/SNZ_N"/>
</dbReference>
<dbReference type="InterPro" id="IPR011060">
    <property type="entry name" value="RibuloseP-bd_barrel"/>
</dbReference>
<dbReference type="NCBIfam" id="NF003215">
    <property type="entry name" value="PRK04180.1"/>
    <property type="match status" value="1"/>
</dbReference>
<dbReference type="NCBIfam" id="TIGR00343">
    <property type="entry name" value="pyridoxal 5'-phosphate synthase lyase subunit PdxS"/>
    <property type="match status" value="1"/>
</dbReference>
<dbReference type="PANTHER" id="PTHR31829">
    <property type="entry name" value="PYRIDOXAL 5'-PHOSPHATE SYNTHASE SUBUNIT SNZ1-RELATED"/>
    <property type="match status" value="1"/>
</dbReference>
<dbReference type="PANTHER" id="PTHR31829:SF0">
    <property type="entry name" value="PYRIDOXAL 5'-PHOSPHATE SYNTHASE SUBUNIT SNZ1-RELATED"/>
    <property type="match status" value="1"/>
</dbReference>
<dbReference type="Pfam" id="PF01680">
    <property type="entry name" value="SOR_SNZ"/>
    <property type="match status" value="1"/>
</dbReference>
<dbReference type="PIRSF" id="PIRSF029271">
    <property type="entry name" value="Pdx1"/>
    <property type="match status" value="1"/>
</dbReference>
<dbReference type="SUPFAM" id="SSF51366">
    <property type="entry name" value="Ribulose-phoshate binding barrel"/>
    <property type="match status" value="1"/>
</dbReference>
<dbReference type="PROSITE" id="PS01235">
    <property type="entry name" value="PDXS_SNZ_1"/>
    <property type="match status" value="1"/>
</dbReference>
<dbReference type="PROSITE" id="PS51129">
    <property type="entry name" value="PDXS_SNZ_2"/>
    <property type="match status" value="1"/>
</dbReference>